<evidence type="ECO:0000255" key="1">
    <source>
        <dbReference type="HAMAP-Rule" id="MF_00480"/>
    </source>
</evidence>
<evidence type="ECO:0000305" key="2"/>
<name>RS7_HALHL</name>
<protein>
    <recommendedName>
        <fullName evidence="1">Small ribosomal subunit protein uS7</fullName>
    </recommendedName>
    <alternativeName>
        <fullName evidence="2">30S ribosomal protein S7</fullName>
    </alternativeName>
</protein>
<dbReference type="EMBL" id="CP000544">
    <property type="protein sequence ID" value="ABM61638.1"/>
    <property type="molecule type" value="Genomic_DNA"/>
</dbReference>
<dbReference type="RefSeq" id="WP_011813661.1">
    <property type="nucleotide sequence ID" value="NC_008789.1"/>
</dbReference>
<dbReference type="SMR" id="A1WVC6"/>
<dbReference type="STRING" id="349124.Hhal_0862"/>
<dbReference type="KEGG" id="hha:Hhal_0862"/>
<dbReference type="eggNOG" id="COG0049">
    <property type="taxonomic scope" value="Bacteria"/>
</dbReference>
<dbReference type="HOGENOM" id="CLU_072226_1_1_6"/>
<dbReference type="OrthoDB" id="9807653at2"/>
<dbReference type="Proteomes" id="UP000000647">
    <property type="component" value="Chromosome"/>
</dbReference>
<dbReference type="GO" id="GO:0015935">
    <property type="term" value="C:small ribosomal subunit"/>
    <property type="evidence" value="ECO:0007669"/>
    <property type="project" value="InterPro"/>
</dbReference>
<dbReference type="GO" id="GO:0019843">
    <property type="term" value="F:rRNA binding"/>
    <property type="evidence" value="ECO:0007669"/>
    <property type="project" value="UniProtKB-UniRule"/>
</dbReference>
<dbReference type="GO" id="GO:0003735">
    <property type="term" value="F:structural constituent of ribosome"/>
    <property type="evidence" value="ECO:0007669"/>
    <property type="project" value="InterPro"/>
</dbReference>
<dbReference type="GO" id="GO:0000049">
    <property type="term" value="F:tRNA binding"/>
    <property type="evidence" value="ECO:0007669"/>
    <property type="project" value="UniProtKB-UniRule"/>
</dbReference>
<dbReference type="GO" id="GO:0006412">
    <property type="term" value="P:translation"/>
    <property type="evidence" value="ECO:0007669"/>
    <property type="project" value="UniProtKB-UniRule"/>
</dbReference>
<dbReference type="CDD" id="cd14869">
    <property type="entry name" value="uS7_Bacteria"/>
    <property type="match status" value="1"/>
</dbReference>
<dbReference type="FunFam" id="1.10.455.10:FF:000001">
    <property type="entry name" value="30S ribosomal protein S7"/>
    <property type="match status" value="1"/>
</dbReference>
<dbReference type="Gene3D" id="1.10.455.10">
    <property type="entry name" value="Ribosomal protein S7 domain"/>
    <property type="match status" value="1"/>
</dbReference>
<dbReference type="HAMAP" id="MF_00480_B">
    <property type="entry name" value="Ribosomal_uS7_B"/>
    <property type="match status" value="1"/>
</dbReference>
<dbReference type="InterPro" id="IPR000235">
    <property type="entry name" value="Ribosomal_uS7"/>
</dbReference>
<dbReference type="InterPro" id="IPR005717">
    <property type="entry name" value="Ribosomal_uS7_bac/org-type"/>
</dbReference>
<dbReference type="InterPro" id="IPR020606">
    <property type="entry name" value="Ribosomal_uS7_CS"/>
</dbReference>
<dbReference type="InterPro" id="IPR023798">
    <property type="entry name" value="Ribosomal_uS7_dom"/>
</dbReference>
<dbReference type="InterPro" id="IPR036823">
    <property type="entry name" value="Ribosomal_uS7_dom_sf"/>
</dbReference>
<dbReference type="NCBIfam" id="TIGR01029">
    <property type="entry name" value="rpsG_bact"/>
    <property type="match status" value="1"/>
</dbReference>
<dbReference type="PANTHER" id="PTHR11205">
    <property type="entry name" value="RIBOSOMAL PROTEIN S7"/>
    <property type="match status" value="1"/>
</dbReference>
<dbReference type="Pfam" id="PF00177">
    <property type="entry name" value="Ribosomal_S7"/>
    <property type="match status" value="1"/>
</dbReference>
<dbReference type="PIRSF" id="PIRSF002122">
    <property type="entry name" value="RPS7p_RPS7a_RPS5e_RPS7o"/>
    <property type="match status" value="1"/>
</dbReference>
<dbReference type="SUPFAM" id="SSF47973">
    <property type="entry name" value="Ribosomal protein S7"/>
    <property type="match status" value="1"/>
</dbReference>
<dbReference type="PROSITE" id="PS00052">
    <property type="entry name" value="RIBOSOMAL_S7"/>
    <property type="match status" value="1"/>
</dbReference>
<feature type="chain" id="PRO_1000014203" description="Small ribosomal subunit protein uS7">
    <location>
        <begin position="1"/>
        <end position="155"/>
    </location>
</feature>
<comment type="function">
    <text evidence="1">One of the primary rRNA binding proteins, it binds directly to 16S rRNA where it nucleates assembly of the head domain of the 30S subunit. Is located at the subunit interface close to the decoding center, probably blocks exit of the E-site tRNA.</text>
</comment>
<comment type="subunit">
    <text evidence="1">Part of the 30S ribosomal subunit. Contacts proteins S9 and S11.</text>
</comment>
<comment type="similarity">
    <text evidence="1">Belongs to the universal ribosomal protein uS7 family.</text>
</comment>
<keyword id="KW-1185">Reference proteome</keyword>
<keyword id="KW-0687">Ribonucleoprotein</keyword>
<keyword id="KW-0689">Ribosomal protein</keyword>
<keyword id="KW-0694">RNA-binding</keyword>
<keyword id="KW-0699">rRNA-binding</keyword>
<keyword id="KW-0820">tRNA-binding</keyword>
<gene>
    <name evidence="1" type="primary">rpsG</name>
    <name type="ordered locus">Hhal_0862</name>
</gene>
<accession>A1WVC6</accession>
<organism>
    <name type="scientific">Halorhodospira halophila (strain DSM 244 / SL1)</name>
    <name type="common">Ectothiorhodospira halophila (strain DSM 244 / SL1)</name>
    <dbReference type="NCBI Taxonomy" id="349124"/>
    <lineage>
        <taxon>Bacteria</taxon>
        <taxon>Pseudomonadati</taxon>
        <taxon>Pseudomonadota</taxon>
        <taxon>Gammaproteobacteria</taxon>
        <taxon>Chromatiales</taxon>
        <taxon>Ectothiorhodospiraceae</taxon>
        <taxon>Halorhodospira</taxon>
    </lineage>
</organism>
<reference key="1">
    <citation type="submission" date="2006-12" db="EMBL/GenBank/DDBJ databases">
        <title>Complete sequence of Halorhodospira halophila SL1.</title>
        <authorList>
            <consortium name="US DOE Joint Genome Institute"/>
            <person name="Copeland A."/>
            <person name="Lucas S."/>
            <person name="Lapidus A."/>
            <person name="Barry K."/>
            <person name="Detter J.C."/>
            <person name="Glavina del Rio T."/>
            <person name="Hammon N."/>
            <person name="Israni S."/>
            <person name="Dalin E."/>
            <person name="Tice H."/>
            <person name="Pitluck S."/>
            <person name="Saunders E."/>
            <person name="Brettin T."/>
            <person name="Bruce D."/>
            <person name="Han C."/>
            <person name="Tapia R."/>
            <person name="Schmutz J."/>
            <person name="Larimer F."/>
            <person name="Land M."/>
            <person name="Hauser L."/>
            <person name="Kyrpides N."/>
            <person name="Mikhailova N."/>
            <person name="Hoff W."/>
            <person name="Richardson P."/>
        </authorList>
    </citation>
    <scope>NUCLEOTIDE SEQUENCE [LARGE SCALE GENOMIC DNA]</scope>
    <source>
        <strain>DSM 244 / SL1</strain>
    </source>
</reference>
<proteinExistence type="inferred from homology"/>
<sequence length="155" mass="17892">MPRRREVPKRKVLPDPKYGSEVLTKFVNMVMSDGKRSVAERILYGALERIGSKHDDPIEVMETALENVKPRVEVKSRRVGGATYQVPVEVRPERRQTLAMRWLLEAARKRGEKTMAARMANEMLEAAESRGTAVKKREDTHRMAEANKAFSHYRW</sequence>